<name>LEUC_STRCO</name>
<reference key="1">
    <citation type="journal article" date="2002" name="Nature">
        <title>Complete genome sequence of the model actinomycete Streptomyces coelicolor A3(2).</title>
        <authorList>
            <person name="Bentley S.D."/>
            <person name="Chater K.F."/>
            <person name="Cerdeno-Tarraga A.-M."/>
            <person name="Challis G.L."/>
            <person name="Thomson N.R."/>
            <person name="James K.D."/>
            <person name="Harris D.E."/>
            <person name="Quail M.A."/>
            <person name="Kieser H."/>
            <person name="Harper D."/>
            <person name="Bateman A."/>
            <person name="Brown S."/>
            <person name="Chandra G."/>
            <person name="Chen C.W."/>
            <person name="Collins M."/>
            <person name="Cronin A."/>
            <person name="Fraser A."/>
            <person name="Goble A."/>
            <person name="Hidalgo J."/>
            <person name="Hornsby T."/>
            <person name="Howarth S."/>
            <person name="Huang C.-H."/>
            <person name="Kieser T."/>
            <person name="Larke L."/>
            <person name="Murphy L.D."/>
            <person name="Oliver K."/>
            <person name="O'Neil S."/>
            <person name="Rabbinowitsch E."/>
            <person name="Rajandream M.A."/>
            <person name="Rutherford K.M."/>
            <person name="Rutter S."/>
            <person name="Seeger K."/>
            <person name="Saunders D."/>
            <person name="Sharp S."/>
            <person name="Squares R."/>
            <person name="Squares S."/>
            <person name="Taylor K."/>
            <person name="Warren T."/>
            <person name="Wietzorrek A."/>
            <person name="Woodward J.R."/>
            <person name="Barrell B.G."/>
            <person name="Parkhill J."/>
            <person name="Hopwood D.A."/>
        </authorList>
    </citation>
    <scope>NUCLEOTIDE SEQUENCE [LARGE SCALE GENOMIC DNA]</scope>
    <source>
        <strain>ATCC BAA-471 / A3(2) / M145</strain>
    </source>
</reference>
<comment type="function">
    <text evidence="1">Catalyzes the isomerization between 2-isopropylmalate and 3-isopropylmalate, via the formation of 2-isopropylmaleate.</text>
</comment>
<comment type="catalytic activity">
    <reaction evidence="1">
        <text>(2R,3S)-3-isopropylmalate = (2S)-2-isopropylmalate</text>
        <dbReference type="Rhea" id="RHEA:32287"/>
        <dbReference type="ChEBI" id="CHEBI:1178"/>
        <dbReference type="ChEBI" id="CHEBI:35121"/>
        <dbReference type="EC" id="4.2.1.33"/>
    </reaction>
</comment>
<comment type="cofactor">
    <cofactor evidence="1">
        <name>[4Fe-4S] cluster</name>
        <dbReference type="ChEBI" id="CHEBI:49883"/>
    </cofactor>
    <text evidence="1">Binds 1 [4Fe-4S] cluster per subunit.</text>
</comment>
<comment type="pathway">
    <text evidence="1">Amino-acid biosynthesis; L-leucine biosynthesis; L-leucine from 3-methyl-2-oxobutanoate: step 2/4.</text>
</comment>
<comment type="subunit">
    <text evidence="1">Heterodimer of LeuC and LeuD.</text>
</comment>
<comment type="similarity">
    <text evidence="1">Belongs to the aconitase/IPM isomerase family. LeuC type 1 subfamily.</text>
</comment>
<dbReference type="EC" id="4.2.1.33" evidence="1"/>
<dbReference type="EMBL" id="AL939124">
    <property type="protein sequence ID" value="CAA20001.1"/>
    <property type="molecule type" value="Genomic_DNA"/>
</dbReference>
<dbReference type="PIR" id="T29083">
    <property type="entry name" value="T29083"/>
</dbReference>
<dbReference type="RefSeq" id="NP_629687.1">
    <property type="nucleotide sequence ID" value="NC_003888.3"/>
</dbReference>
<dbReference type="RefSeq" id="WP_003973442.1">
    <property type="nucleotide sequence ID" value="NZ_VNID01000011.1"/>
</dbReference>
<dbReference type="SMR" id="O86534"/>
<dbReference type="FunCoup" id="O86534">
    <property type="interactions" value="291"/>
</dbReference>
<dbReference type="STRING" id="100226.gene:17763210"/>
<dbReference type="PaxDb" id="100226-SCO5553"/>
<dbReference type="GeneID" id="91383475"/>
<dbReference type="KEGG" id="sco:SCO5553"/>
<dbReference type="PATRIC" id="fig|100226.15.peg.5641"/>
<dbReference type="eggNOG" id="COG0065">
    <property type="taxonomic scope" value="Bacteria"/>
</dbReference>
<dbReference type="HOGENOM" id="CLU_006714_3_4_11"/>
<dbReference type="InParanoid" id="O86534"/>
<dbReference type="OrthoDB" id="9802769at2"/>
<dbReference type="PhylomeDB" id="O86534"/>
<dbReference type="UniPathway" id="UPA00048">
    <property type="reaction ID" value="UER00071"/>
</dbReference>
<dbReference type="Proteomes" id="UP000001973">
    <property type="component" value="Chromosome"/>
</dbReference>
<dbReference type="GO" id="GO:0003861">
    <property type="term" value="F:3-isopropylmalate dehydratase activity"/>
    <property type="evidence" value="ECO:0007669"/>
    <property type="project" value="UniProtKB-UniRule"/>
</dbReference>
<dbReference type="GO" id="GO:0051539">
    <property type="term" value="F:4 iron, 4 sulfur cluster binding"/>
    <property type="evidence" value="ECO:0007669"/>
    <property type="project" value="UniProtKB-KW"/>
</dbReference>
<dbReference type="GO" id="GO:0046872">
    <property type="term" value="F:metal ion binding"/>
    <property type="evidence" value="ECO:0007669"/>
    <property type="project" value="UniProtKB-KW"/>
</dbReference>
<dbReference type="GO" id="GO:0009098">
    <property type="term" value="P:L-leucine biosynthetic process"/>
    <property type="evidence" value="ECO:0007669"/>
    <property type="project" value="UniProtKB-UniRule"/>
</dbReference>
<dbReference type="CDD" id="cd01583">
    <property type="entry name" value="IPMI"/>
    <property type="match status" value="1"/>
</dbReference>
<dbReference type="FunFam" id="3.30.499.10:FF:000007">
    <property type="entry name" value="3-isopropylmalate dehydratase large subunit"/>
    <property type="match status" value="1"/>
</dbReference>
<dbReference type="Gene3D" id="3.30.499.10">
    <property type="entry name" value="Aconitase, domain 3"/>
    <property type="match status" value="2"/>
</dbReference>
<dbReference type="HAMAP" id="MF_01026">
    <property type="entry name" value="LeuC_type1"/>
    <property type="match status" value="1"/>
</dbReference>
<dbReference type="InterPro" id="IPR004430">
    <property type="entry name" value="3-IsopropMal_deHydase_lsu"/>
</dbReference>
<dbReference type="InterPro" id="IPR015931">
    <property type="entry name" value="Acnase/IPM_dHydase_lsu_aba_1/3"/>
</dbReference>
<dbReference type="InterPro" id="IPR001030">
    <property type="entry name" value="Acoase/IPM_deHydtase_lsu_aba"/>
</dbReference>
<dbReference type="InterPro" id="IPR018136">
    <property type="entry name" value="Aconitase_4Fe-4S_BS"/>
</dbReference>
<dbReference type="InterPro" id="IPR036008">
    <property type="entry name" value="Aconitase_4Fe-4S_dom"/>
</dbReference>
<dbReference type="InterPro" id="IPR050067">
    <property type="entry name" value="IPM_dehydratase_rel_enz"/>
</dbReference>
<dbReference type="InterPro" id="IPR033941">
    <property type="entry name" value="IPMI_cat"/>
</dbReference>
<dbReference type="NCBIfam" id="TIGR00170">
    <property type="entry name" value="leuC"/>
    <property type="match status" value="1"/>
</dbReference>
<dbReference type="NCBIfam" id="NF004016">
    <property type="entry name" value="PRK05478.1"/>
    <property type="match status" value="1"/>
</dbReference>
<dbReference type="NCBIfam" id="NF009116">
    <property type="entry name" value="PRK12466.1"/>
    <property type="match status" value="1"/>
</dbReference>
<dbReference type="PANTHER" id="PTHR43822:SF9">
    <property type="entry name" value="3-ISOPROPYLMALATE DEHYDRATASE"/>
    <property type="match status" value="1"/>
</dbReference>
<dbReference type="PANTHER" id="PTHR43822">
    <property type="entry name" value="HOMOACONITASE, MITOCHONDRIAL-RELATED"/>
    <property type="match status" value="1"/>
</dbReference>
<dbReference type="Pfam" id="PF00330">
    <property type="entry name" value="Aconitase"/>
    <property type="match status" value="1"/>
</dbReference>
<dbReference type="PRINTS" id="PR00415">
    <property type="entry name" value="ACONITASE"/>
</dbReference>
<dbReference type="SUPFAM" id="SSF53732">
    <property type="entry name" value="Aconitase iron-sulfur domain"/>
    <property type="match status" value="1"/>
</dbReference>
<dbReference type="PROSITE" id="PS00450">
    <property type="entry name" value="ACONITASE_1"/>
    <property type="match status" value="1"/>
</dbReference>
<dbReference type="PROSITE" id="PS01244">
    <property type="entry name" value="ACONITASE_2"/>
    <property type="match status" value="1"/>
</dbReference>
<evidence type="ECO:0000255" key="1">
    <source>
        <dbReference type="HAMAP-Rule" id="MF_01026"/>
    </source>
</evidence>
<evidence type="ECO:0000256" key="2">
    <source>
        <dbReference type="SAM" id="MobiDB-lite"/>
    </source>
</evidence>
<sequence length="476" mass="50480">MGRTLAEKVWDDHVVRRAEGEPDLLFIDLHLLHEVTSPQAFDGLRKSGRPVRRLDLTIATEDHNTPTLDIDKPIADPVSRAQLETLRKNCADFGVRLHPLGDVEQGVVHVVGPQLGLTQPGTTVVCGDSHTSTHGAFGALAFGIGTSQVEHVLATQTLPLARPKTMAITVDGELPEGVTAKDLILAIIARIGTGGGQGYILEYRGEAIEKLSMEARMTICNMSIEAGARAGMIAPDETTFAYLQGRPHAPEGADWDAAVEYWKTLRTDDDAEFDAEVVIEAAELAPFVTWGTNPGQGAPLSAAVPDPASYEDASERFAAEKALEYMGLEAGQPLRSIQVDTVFVGSCTNGRIEDLRAAAEIVRDRKVADGVRMLVVPGSARVGLQAVSEGLDVVFKEAGAEWRHAGCSMCLGMNPDQLAPGERSASTSNRNFEGRQGKGGRTHLVSPQVAAATAVLGHLASPADLSAADVPTPAGV</sequence>
<organism>
    <name type="scientific">Streptomyces coelicolor (strain ATCC BAA-471 / A3(2) / M145)</name>
    <dbReference type="NCBI Taxonomy" id="100226"/>
    <lineage>
        <taxon>Bacteria</taxon>
        <taxon>Bacillati</taxon>
        <taxon>Actinomycetota</taxon>
        <taxon>Actinomycetes</taxon>
        <taxon>Kitasatosporales</taxon>
        <taxon>Streptomycetaceae</taxon>
        <taxon>Streptomyces</taxon>
        <taxon>Streptomyces albidoflavus group</taxon>
    </lineage>
</organism>
<accession>O86534</accession>
<proteinExistence type="inferred from homology"/>
<keyword id="KW-0004">4Fe-4S</keyword>
<keyword id="KW-0028">Amino-acid biosynthesis</keyword>
<keyword id="KW-0100">Branched-chain amino acid biosynthesis</keyword>
<keyword id="KW-0408">Iron</keyword>
<keyword id="KW-0411">Iron-sulfur</keyword>
<keyword id="KW-0432">Leucine biosynthesis</keyword>
<keyword id="KW-0456">Lyase</keyword>
<keyword id="KW-0479">Metal-binding</keyword>
<keyword id="KW-1185">Reference proteome</keyword>
<feature type="chain" id="PRO_0000076826" description="3-isopropylmalate dehydratase large subunit">
    <location>
        <begin position="1"/>
        <end position="476"/>
    </location>
</feature>
<feature type="region of interest" description="Disordered" evidence="2">
    <location>
        <begin position="418"/>
        <end position="442"/>
    </location>
</feature>
<feature type="binding site" evidence="1">
    <location>
        <position position="347"/>
    </location>
    <ligand>
        <name>[4Fe-4S] cluster</name>
        <dbReference type="ChEBI" id="CHEBI:49883"/>
    </ligand>
</feature>
<feature type="binding site" evidence="1">
    <location>
        <position position="407"/>
    </location>
    <ligand>
        <name>[4Fe-4S] cluster</name>
        <dbReference type="ChEBI" id="CHEBI:49883"/>
    </ligand>
</feature>
<feature type="binding site" evidence="1">
    <location>
        <position position="410"/>
    </location>
    <ligand>
        <name>[4Fe-4S] cluster</name>
        <dbReference type="ChEBI" id="CHEBI:49883"/>
    </ligand>
</feature>
<protein>
    <recommendedName>
        <fullName evidence="1">3-isopropylmalate dehydratase large subunit</fullName>
        <ecNumber evidence="1">4.2.1.33</ecNumber>
    </recommendedName>
    <alternativeName>
        <fullName evidence="1">Alpha-IPM isomerase</fullName>
        <shortName evidence="1">IPMI</shortName>
    </alternativeName>
    <alternativeName>
        <fullName evidence="1">Isopropylmalate isomerase</fullName>
    </alternativeName>
</protein>
<gene>
    <name evidence="1" type="primary">leuC</name>
    <name type="ordered locus">SCO5553</name>
    <name type="ORF">SC1C2.34</name>
</gene>